<accession>Q29243</accession>
<accession>I3LD20</accession>
<feature type="signal peptide" evidence="6">
    <location>
        <begin position="1"/>
        <end position="29"/>
    </location>
</feature>
<feature type="chain" id="PRO_0000431681" description="Alpha-dystroglycan" evidence="3">
    <location>
        <begin position="30"/>
        <end position="635"/>
    </location>
</feature>
<feature type="chain" id="PRO_0000431682" description="Beta-dystroglycan" evidence="3">
    <location>
        <begin position="636"/>
        <end position="877"/>
    </location>
</feature>
<feature type="transmembrane region" description="Helical" evidence="6">
    <location>
        <begin position="732"/>
        <end position="757"/>
    </location>
</feature>
<feature type="domain" description="Peptidase S72" evidence="8">
    <location>
        <begin position="585"/>
        <end position="694"/>
    </location>
</feature>
<feature type="region of interest" description="Required for laminin recognition" evidence="3">
    <location>
        <begin position="30"/>
        <end position="408"/>
    </location>
</feature>
<feature type="region of interest" description="O-glycosylated at one site" evidence="1">
    <location>
        <begin position="49"/>
        <end position="71"/>
    </location>
</feature>
<feature type="region of interest" description="Mucin-like domain" evidence="1">
    <location>
        <begin position="316"/>
        <end position="468"/>
    </location>
</feature>
<feature type="region of interest" description="Disordered" evidence="7">
    <location>
        <begin position="380"/>
        <end position="444"/>
    </location>
</feature>
<feature type="region of interest" description="O-glycosylated at seven sites with GalNAc" evidence="1">
    <location>
        <begin position="446"/>
        <end position="468"/>
    </location>
</feature>
<feature type="region of interest" description="Disordered" evidence="7">
    <location>
        <begin position="458"/>
        <end position="480"/>
    </location>
</feature>
<feature type="region of interest" description="Disordered" evidence="7">
    <location>
        <begin position="706"/>
        <end position="727"/>
    </location>
</feature>
<feature type="region of interest" description="Required for interaction with CAV3" evidence="1">
    <location>
        <begin position="801"/>
        <end position="877"/>
    </location>
</feature>
<feature type="region of interest" description="Disordered" evidence="7">
    <location>
        <begin position="805"/>
        <end position="877"/>
    </location>
</feature>
<feature type="region of interest" description="Required for binding DMD and UTRN" evidence="1">
    <location>
        <begin position="862"/>
        <end position="877"/>
    </location>
</feature>
<feature type="short sequence motif" description="Nuclear localization signal" evidence="1">
    <location>
        <begin position="758"/>
        <end position="764"/>
    </location>
</feature>
<feature type="short sequence motif" description="PPXY motif" evidence="1">
    <location>
        <begin position="871"/>
        <end position="874"/>
    </location>
</feature>
<feature type="compositionally biased region" description="Low complexity" evidence="7">
    <location>
        <begin position="413"/>
        <end position="433"/>
    </location>
</feature>
<feature type="compositionally biased region" description="Pro residues" evidence="7">
    <location>
        <begin position="706"/>
        <end position="717"/>
    </location>
</feature>
<feature type="compositionally biased region" description="Basic and acidic residues" evidence="7">
    <location>
        <begin position="718"/>
        <end position="727"/>
    </location>
</feature>
<feature type="compositionally biased region" description="Polar residues" evidence="7">
    <location>
        <begin position="814"/>
        <end position="828"/>
    </location>
</feature>
<feature type="compositionally biased region" description="Pro residues" evidence="7">
    <location>
        <begin position="841"/>
        <end position="852"/>
    </location>
</feature>
<feature type="site" description="Cleavage; by autolysis" evidence="1">
    <location>
        <begin position="635"/>
        <end position="636"/>
    </location>
</feature>
<feature type="site" description="Cleavage; by MMP9" evidence="1">
    <location>
        <begin position="697"/>
        <end position="698"/>
    </location>
</feature>
<feature type="modified residue" description="Phosphothreonine" evidence="3">
    <location>
        <position position="772"/>
    </location>
</feature>
<feature type="modified residue" description="Phosphotyrosine; by SRC" evidence="3">
    <location>
        <position position="874"/>
    </location>
</feature>
<feature type="glycosylation site" description="N-linked (GlcNAc...) asparagine" evidence="6">
    <location>
        <position position="141"/>
    </location>
</feature>
<feature type="glycosylation site" description="O-linked (Man6P...) threonine" evidence="3">
    <location>
        <position position="317"/>
    </location>
</feature>
<feature type="glycosylation site" description="O-linked (Man6P...) threonine" evidence="3">
    <location>
        <position position="319"/>
    </location>
</feature>
<feature type="glycosylation site" description="O-linked (Man6P...) threonine" evidence="1">
    <location>
        <position position="379"/>
    </location>
</feature>
<feature type="glycosylation site" description="N-linked (GlcNAc...) asparagine" evidence="6">
    <location>
        <position position="623"/>
    </location>
</feature>
<feature type="glycosylation site" description="N-linked (GlcNAc...) asparagine" evidence="6">
    <location>
        <position position="631"/>
    </location>
</feature>
<feature type="glycosylation site" description="N-linked (GlcNAc...) asparagine" evidence="6">
    <location>
        <position position="643"/>
    </location>
</feature>
<feature type="disulfide bond" evidence="3">
    <location>
        <begin position="182"/>
        <end position="264"/>
    </location>
</feature>
<feature type="disulfide bond" evidence="3">
    <location>
        <begin position="651"/>
        <end position="695"/>
    </location>
</feature>
<feature type="sequence conflict" description="In Ref. 2; CAA23292." evidence="8" ref="2">
    <original>V</original>
    <variation>E</variation>
    <location>
        <position position="530"/>
    </location>
</feature>
<feature type="sequence conflict" description="In Ref. 2; CAA23292." evidence="8" ref="2">
    <original>D</original>
    <variation>G</variation>
    <location>
        <position position="563"/>
    </location>
</feature>
<reference key="1">
    <citation type="submission" date="2009-11" db="EMBL/GenBank/DDBJ databases">
        <authorList>
            <consortium name="Porcine genome sequencing project"/>
        </authorList>
    </citation>
    <scope>NUCLEOTIDE SEQUENCE [LARGE SCALE GENOMIC DNA]</scope>
</reference>
<reference key="2">
    <citation type="journal article" date="1996" name="Mamm. Genome">
        <title>Evaluation and characterization of a porcine small intestine cDNA library: analysis of 839 clones.</title>
        <authorList>
            <person name="Winteroe A.K."/>
            <person name="Fredholm M."/>
            <person name="Davies W."/>
        </authorList>
    </citation>
    <scope>NUCLEOTIDE SEQUENCE [LARGE SCALE MRNA] OF 439-566</scope>
    <source>
        <tissue>Small intestine</tissue>
    </source>
</reference>
<keyword id="KW-1003">Cell membrane</keyword>
<keyword id="KW-0963">Cytoplasm</keyword>
<keyword id="KW-0206">Cytoskeleton</keyword>
<keyword id="KW-1015">Disulfide bond</keyword>
<keyword id="KW-0325">Glycoprotein</keyword>
<keyword id="KW-0472">Membrane</keyword>
<keyword id="KW-0539">Nucleus</keyword>
<keyword id="KW-0597">Phosphoprotein</keyword>
<keyword id="KW-0628">Postsynaptic cell membrane</keyword>
<keyword id="KW-1185">Reference proteome</keyword>
<keyword id="KW-0964">Secreted</keyword>
<keyword id="KW-0732">Signal</keyword>
<keyword id="KW-0770">Synapse</keyword>
<keyword id="KW-0812">Transmembrane</keyword>
<keyword id="KW-1133">Transmembrane helix</keyword>
<evidence type="ECO:0000250" key="1"/>
<evidence type="ECO:0000250" key="2">
    <source>
        <dbReference type="UniProtKB" id="O18738"/>
    </source>
</evidence>
<evidence type="ECO:0000250" key="3">
    <source>
        <dbReference type="UniProtKB" id="Q14118"/>
    </source>
</evidence>
<evidence type="ECO:0000250" key="4">
    <source>
        <dbReference type="UniProtKB" id="Q28685"/>
    </source>
</evidence>
<evidence type="ECO:0000250" key="5">
    <source>
        <dbReference type="UniProtKB" id="Q62165"/>
    </source>
</evidence>
<evidence type="ECO:0000255" key="6"/>
<evidence type="ECO:0000256" key="7">
    <source>
        <dbReference type="SAM" id="MobiDB-lite"/>
    </source>
</evidence>
<evidence type="ECO:0000305" key="8"/>
<proteinExistence type="evidence at transcript level"/>
<dbReference type="EMBL" id="F14847">
    <property type="protein sequence ID" value="CAA23292.1"/>
    <property type="molecule type" value="mRNA"/>
</dbReference>
<dbReference type="FunCoup" id="Q29243">
    <property type="interactions" value="292"/>
</dbReference>
<dbReference type="STRING" id="9823.ENSSSCP00000053965"/>
<dbReference type="GlyCosmos" id="Q29243">
    <property type="glycosylation" value="7 sites, No reported glycans"/>
</dbReference>
<dbReference type="GlyGen" id="Q29243">
    <property type="glycosylation" value="9 sites"/>
</dbReference>
<dbReference type="PaxDb" id="9823-ENSSSCP00000021948"/>
<dbReference type="PeptideAtlas" id="Q29243"/>
<dbReference type="eggNOG" id="KOG3781">
    <property type="taxonomic scope" value="Eukaryota"/>
</dbReference>
<dbReference type="InParanoid" id="Q29243"/>
<dbReference type="TreeFam" id="TF328370"/>
<dbReference type="Proteomes" id="UP000008227">
    <property type="component" value="Unplaced"/>
</dbReference>
<dbReference type="Proteomes" id="UP000314985">
    <property type="component" value="Unplaced"/>
</dbReference>
<dbReference type="Proteomes" id="UP000694570">
    <property type="component" value="Unplaced"/>
</dbReference>
<dbReference type="Proteomes" id="UP000694571">
    <property type="component" value="Unplaced"/>
</dbReference>
<dbReference type="Proteomes" id="UP000694720">
    <property type="component" value="Unplaced"/>
</dbReference>
<dbReference type="Proteomes" id="UP000694722">
    <property type="component" value="Unplaced"/>
</dbReference>
<dbReference type="Proteomes" id="UP000694723">
    <property type="component" value="Unplaced"/>
</dbReference>
<dbReference type="Proteomes" id="UP000694724">
    <property type="component" value="Unplaced"/>
</dbReference>
<dbReference type="Proteomes" id="UP000694725">
    <property type="component" value="Unplaced"/>
</dbReference>
<dbReference type="Proteomes" id="UP000694726">
    <property type="component" value="Unplaced"/>
</dbReference>
<dbReference type="Proteomes" id="UP000694727">
    <property type="component" value="Unplaced"/>
</dbReference>
<dbReference type="Proteomes" id="UP000694728">
    <property type="component" value="Unplaced"/>
</dbReference>
<dbReference type="GO" id="GO:0005604">
    <property type="term" value="C:basement membrane"/>
    <property type="evidence" value="ECO:0000318"/>
    <property type="project" value="GO_Central"/>
</dbReference>
<dbReference type="GO" id="GO:0005737">
    <property type="term" value="C:cytoplasm"/>
    <property type="evidence" value="ECO:0007669"/>
    <property type="project" value="UniProtKB-KW"/>
</dbReference>
<dbReference type="GO" id="GO:0005856">
    <property type="term" value="C:cytoskeleton"/>
    <property type="evidence" value="ECO:0007669"/>
    <property type="project" value="UniProtKB-SubCell"/>
</dbReference>
<dbReference type="GO" id="GO:0016011">
    <property type="term" value="C:dystroglycan complex"/>
    <property type="evidence" value="ECO:0000318"/>
    <property type="project" value="GO_Central"/>
</dbReference>
<dbReference type="GO" id="GO:0005615">
    <property type="term" value="C:extracellular space"/>
    <property type="evidence" value="ECO:0000318"/>
    <property type="project" value="GO_Central"/>
</dbReference>
<dbReference type="GO" id="GO:0005654">
    <property type="term" value="C:nucleoplasm"/>
    <property type="evidence" value="ECO:0007669"/>
    <property type="project" value="UniProtKB-SubCell"/>
</dbReference>
<dbReference type="GO" id="GO:0045211">
    <property type="term" value="C:postsynaptic membrane"/>
    <property type="evidence" value="ECO:0007669"/>
    <property type="project" value="UniProtKB-SubCell"/>
</dbReference>
<dbReference type="GO" id="GO:0042383">
    <property type="term" value="C:sarcolemma"/>
    <property type="evidence" value="ECO:0000318"/>
    <property type="project" value="GO_Central"/>
</dbReference>
<dbReference type="GO" id="GO:0005509">
    <property type="term" value="F:calcium ion binding"/>
    <property type="evidence" value="ECO:0007669"/>
    <property type="project" value="InterPro"/>
</dbReference>
<dbReference type="GO" id="GO:0043236">
    <property type="term" value="F:laminin binding"/>
    <property type="evidence" value="ECO:0000318"/>
    <property type="project" value="GO_Central"/>
</dbReference>
<dbReference type="GO" id="GO:0007411">
    <property type="term" value="P:axon guidance"/>
    <property type="evidence" value="ECO:0000318"/>
    <property type="project" value="GO_Central"/>
</dbReference>
<dbReference type="GO" id="GO:0002009">
    <property type="term" value="P:morphogenesis of an epithelium"/>
    <property type="evidence" value="ECO:0000318"/>
    <property type="project" value="GO_Central"/>
</dbReference>
<dbReference type="GO" id="GO:0016203">
    <property type="term" value="P:muscle attachment"/>
    <property type="evidence" value="ECO:0000318"/>
    <property type="project" value="GO_Central"/>
</dbReference>
<dbReference type="GO" id="GO:0021675">
    <property type="term" value="P:nerve development"/>
    <property type="evidence" value="ECO:0000318"/>
    <property type="project" value="GO_Central"/>
</dbReference>
<dbReference type="CDD" id="cd11305">
    <property type="entry name" value="alpha_DG_C"/>
    <property type="match status" value="1"/>
</dbReference>
<dbReference type="CDD" id="cd11303">
    <property type="entry name" value="Dystroglycan_repeat"/>
    <property type="match status" value="2"/>
</dbReference>
<dbReference type="FunFam" id="2.60.40.10:FF:000555">
    <property type="entry name" value="Dystroglycan 1"/>
    <property type="match status" value="1"/>
</dbReference>
<dbReference type="FunFam" id="2.60.40.10:FF:000684">
    <property type="entry name" value="Dystroglycan 1"/>
    <property type="match status" value="1"/>
</dbReference>
<dbReference type="FunFam" id="3.30.70.1040:FF:000001">
    <property type="entry name" value="Dystroglycan 1"/>
    <property type="match status" value="1"/>
</dbReference>
<dbReference type="Gene3D" id="3.30.70.1040">
    <property type="entry name" value="Dystroglycan, domain 2"/>
    <property type="match status" value="1"/>
</dbReference>
<dbReference type="Gene3D" id="2.60.40.10">
    <property type="entry name" value="Immunoglobulins"/>
    <property type="match status" value="2"/>
</dbReference>
<dbReference type="InterPro" id="IPR027468">
    <property type="entry name" value="Alpha-dystroglycan_domain_2"/>
</dbReference>
<dbReference type="InterPro" id="IPR041631">
    <property type="entry name" value="Alpha_DG1_N2"/>
</dbReference>
<dbReference type="InterPro" id="IPR006644">
    <property type="entry name" value="Cadg"/>
</dbReference>
<dbReference type="InterPro" id="IPR015919">
    <property type="entry name" value="Cadherin-like_sf"/>
</dbReference>
<dbReference type="InterPro" id="IPR008465">
    <property type="entry name" value="DAG1_C"/>
</dbReference>
<dbReference type="InterPro" id="IPR013783">
    <property type="entry name" value="Ig-like_fold"/>
</dbReference>
<dbReference type="InterPro" id="IPR030398">
    <property type="entry name" value="SEA_DG_dom"/>
</dbReference>
<dbReference type="PANTHER" id="PTHR21559:SF22">
    <property type="entry name" value="DYSTROGLYCAN 1"/>
    <property type="match status" value="1"/>
</dbReference>
<dbReference type="PANTHER" id="PTHR21559">
    <property type="entry name" value="DYSTROGLYCAN-RELATED"/>
    <property type="match status" value="1"/>
</dbReference>
<dbReference type="Pfam" id="PF18424">
    <property type="entry name" value="a_DG1_N2"/>
    <property type="match status" value="1"/>
</dbReference>
<dbReference type="Pfam" id="PF05454">
    <property type="entry name" value="DAG1"/>
    <property type="match status" value="1"/>
</dbReference>
<dbReference type="Pfam" id="PF05345">
    <property type="entry name" value="He_PIG"/>
    <property type="match status" value="1"/>
</dbReference>
<dbReference type="PRINTS" id="PR01217">
    <property type="entry name" value="PRICHEXTENSN"/>
</dbReference>
<dbReference type="SMART" id="SM00736">
    <property type="entry name" value="CADG"/>
    <property type="match status" value="2"/>
</dbReference>
<dbReference type="SUPFAM" id="SSF49313">
    <property type="entry name" value="Cadherin-like"/>
    <property type="match status" value="2"/>
</dbReference>
<dbReference type="SUPFAM" id="SSF111006">
    <property type="entry name" value="Dystroglycan, domain 2"/>
    <property type="match status" value="1"/>
</dbReference>
<dbReference type="PROSITE" id="PS51699">
    <property type="entry name" value="SEA_DG"/>
    <property type="match status" value="1"/>
</dbReference>
<organism>
    <name type="scientific">Sus scrofa</name>
    <name type="common">Pig</name>
    <dbReference type="NCBI Taxonomy" id="9823"/>
    <lineage>
        <taxon>Eukaryota</taxon>
        <taxon>Metazoa</taxon>
        <taxon>Chordata</taxon>
        <taxon>Craniata</taxon>
        <taxon>Vertebrata</taxon>
        <taxon>Euteleostomi</taxon>
        <taxon>Mammalia</taxon>
        <taxon>Eutheria</taxon>
        <taxon>Laurasiatheria</taxon>
        <taxon>Artiodactyla</taxon>
        <taxon>Suina</taxon>
        <taxon>Suidae</taxon>
        <taxon>Sus</taxon>
    </lineage>
</organism>
<sequence>MRMSAGLSLLIPLWGRTFLLLLSVAVTQSRWPSEPSDAVRDWENQLEASMHSVLSDLHEAVPTVVGIPDGTAVVGRSFRVTIPTDLIASGGEIIKVSAAGKEALPSWLHWDPQSHTLEGLPLDTDKGVHYISVSAARLGANGSHVPQTSSVFSIEVYPEDHSEPQSVRAASPDPGEVVSSVCAADEPVTVLTVILDADLTKMIPKQRLDLLQRMQSFSEVELHNMKLVPVVNNRLFDMSAFMAGPGNAKKVIENGALLSWKLGCSLNQNSVPDIHGVEVPAREGAMSAQLGYPVVGWHIANKKPPLPKRIRRQIHATPTPVTAIGPPTTAIQEPPSRIVPTPTSPAIAPPTETMAPPVRDPVPGKPTVTIRTRGAIFQTPTLGPIQPTRVSEAGTTVPGHIRPTMTIPGYLEPTAVATPPTPTTKNPRVSXPTKKPRTPRPVPRVTTKAPITRLETASPPTRIRTTTSGLPRGEPNQRPELKNHIDRVDAWVGTYFEVKIPSDTFYDNEDTTTDKLKLTLKLREQQLVGVKSWVQFNSNSQLMYGLPDSSHVGKHEYFMHATDKGGLSAVDAFEIHVHRRPQGDRAPARFTAKFVGDPAPVVNDIHKKIALVKKLAFAFGDRNCSTITLQNITRGSIVVEWTNNTLPLEPCPKEQITGLSRRIAEDDGKPRAAFSNALEPDFKAMSIAVTGSGSCRHLQFVPVAPPKRVPSEAPPTEVPDRDPEKSSEDDVYLHTVIPAVVVAAILLIAGIIAMICYRKKRKGKLTLEDQATFIKKGVPIIFADELDDSKPPPSSSMPLILQEEKAPLPPPEYPNQSVPETTPLNQDTVGEYTPLRDEDPNAPPYQPPPPFTAPMEGKGSRPKNMTPYRSPPPYVPP</sequence>
<name>DAG1_PIG</name>
<comment type="function">
    <text evidence="1">The dystroglycan complex is involved in a number of processes including laminin and basement membrane assembly, sarcolemmal stability, cell survival, peripheral nerve myelination, nodal structure, cell migration, and epithelial polarization.</text>
</comment>
<comment type="function">
    <molecule>Alpha-dystroglycan</molecule>
    <text evidence="2">Extracellular peripheral glycoprotein that acts as a receptor for extracellular matrix proteins containing laminin-G domains. Receptor for laminin-2 (LAMA2) and agrin in peripheral nerve Schwann cells (By similarity). Also acts as a receptor for laminin LAMA5 (By similarity).</text>
</comment>
<comment type="function">
    <molecule>Beta-dystroglycan</molecule>
    <text evidence="1">Transmembrane protein that plays important roles in connecting the extracellular matrix to the cytoskeleton. Acts as a cell adhesion receptor in both muscle and non-muscle tissues. Receptor for both DMD and UTRN and, through these interactions, scaffolds axin to the cytoskeleton. Also functions in cell adhesion-mediated signaling and implicated in cell polarity (By similarity).</text>
</comment>
<comment type="subunit">
    <text evidence="3 4 5">Monomer. Heterodimer of alpha- and beta-dystroglycan subunits which are the central components of the dystrophin-glycoprotein complex. This complex then can form a dystrophin-associated glycoprotein complex (DGC) which is composed of three subcomplexes: a cytoplasmic complex comprised of DMD (or UTRN), DTNA and a number of syntrophins, such as SNTB1, SNTB2, SNTG1 and SNTG2, the transmembrane dystroglycan complex, and the sarcoglycan-sarcospan complex. Interacts (via the N-terminal of alphaDAG1) with LARGE1; the interaction enhances laminin binding (By similarity). Interacts with SGCD. Interacts with AGR2 and AGR3. Interacts (betaDAG1) with DMD; the interaction is inhibited by phosphorylation on the PPXY motif. Interacts (betaDAG1, via its PPXY motif) with UTRN (via its WWW and ZZ domains); the interaction is inhibited by phosphorylation on the PPXY motif. Interacts (betaDAG1, via its phosphorylated PPXY motif) with the SH2 domain-containing proteins, FYN, CSK, NCK and SHC. Interacts (betaDAG1) with CAV3 (via a central WW-like domain); the interaction disrupts the binding of DMD. BetaDAG1 directly interacts with ANK3, but not with ANK2; this interaction does not interfere with DMD-binding and is required for retention at costameres (By similarity). Identified in a dystroglycan complex that contains at least PRX, DRP2, UTRN, DMD and DAG1 (By similarity). Interacts with POMGNT1 (By similarity). BetaDAG1 interacts with CD93 (By similarity).</text>
</comment>
<comment type="subcellular location">
    <molecule>Alpha-dystroglycan</molecule>
    <subcellularLocation>
        <location evidence="1">Secreted</location>
        <location evidence="1">Extracellular space</location>
    </subcellularLocation>
</comment>
<comment type="subcellular location">
    <molecule>Beta-dystroglycan</molecule>
    <subcellularLocation>
        <location evidence="1">Cell membrane</location>
        <topology evidence="1">Single-pass type I membrane protein</topology>
    </subcellularLocation>
    <subcellularLocation>
        <location>Cytoplasm</location>
        <location>Cytoskeleton</location>
    </subcellularLocation>
    <subcellularLocation>
        <location>Nucleus</location>
        <location>Nucleoplasm</location>
    </subcellularLocation>
    <subcellularLocation>
        <location evidence="1">Cell membrane</location>
        <location evidence="1">Sarcolemma</location>
    </subcellularLocation>
    <subcellularLocation>
        <location evidence="1">Postsynaptic cell membrane</location>
    </subcellularLocation>
    <text evidence="1">The monomeric form translocates to the nucleus via the action of importins and depends on RAN. Nuclear transport is inhibited by Tyr-892 phosphorylation. In skeletal muscle, this phosphorylated form locates to a vesicular internal membrane compartment. In muscle cells, sarcolemma localization requires the presence of ANK2, while localization to costameres requires the presence of ANK3. Localizes to neuromuscular junctions (NMJs) in the presence of ANK2 (By similarity). In peripheral nerves, localizes to the Schwann cell membrane. Colocalizes with ERM proteins in Schwann-cell microvilli (By similarity).</text>
</comment>
<comment type="PTM">
    <molecule>Alpha-dystroglycan</molecule>
    <text evidence="2 3">O-glycosylated. POMGNT1 catalyzes the initial addition of N-acetylglucosamine, giving rise to the GlcNAc(beta1-2)Man(alpha1-)O-Ser/Thr moiety and thus providing the necessary basis for the addition of further carbohydrate moieties. Heavily O-glycosylated comprising of up to two thirds of its mass and the carbohydrate composition differs depending on tissue type. Mucin-type O-glycosylation is important for ligand binding activity. O-mannosylation of alpha-DAG1 is found in high abundance in both brain and muscle where the most abundant glycan is Sia-alpha-2-3-Gal-beta-1-4-Glc-NAc-beta-1-2-Man. In muscle, glycosylation on Thr-317, Thr-319 and Thr-379 by a phosphorylated O-mannosyl glycan with the structure 2-(N-acetylamido)-2-deoxygalactosyl-beta-1,3-2-(N-acetylamido)-2-deoxyglucosyl-beta-1,4-6-phosphomannose is mediated by like-acetylglucosaminyltransferase (LARGE1) protein amd is required for laminin binding. O-glycosylated in the N-terminal region with a core 1 or possibly core 8 glycan. The brain form displays a unique glycosylation pattern which is absent in other tissues; this form shows enhanced binding to laminin LAMA5 compared to the skeletal muscle form (By similarity).</text>
</comment>
<comment type="PTM">
    <molecule>Beta-dystroglycan</molecule>
    <text evidence="3">N-glycosylated.</text>
</comment>
<comment type="PTM">
    <text evidence="1">Autolytic cleavage produces the alpha and beta subunits. In cutaneous cells, as well as in certain pathological conditions, shedding of beta-dystroglycan can occur releasing a peptide of about 30 kDa (By similarity).</text>
</comment>
<comment type="PTM">
    <text evidence="1">SRC-mediated phosphorylation of the PPXY motif of the beta subunit recruits SH2 domain-containing proteins, but inhibits binding to WWW domain-containing proteins, DMD and UTRN. This phosphorylation also inhibits nuclear entry (By similarity).</text>
</comment>
<gene>
    <name evidence="3" type="primary">DAG1</name>
</gene>
<protein>
    <recommendedName>
        <fullName evidence="3">Dystroglycan 1</fullName>
    </recommendedName>
    <alternativeName>
        <fullName evidence="3">Dystroglycan</fullName>
    </alternativeName>
    <alternativeName>
        <fullName evidence="3">Dystrophin-associated glycoprotein 1</fullName>
    </alternativeName>
    <component>
        <recommendedName>
            <fullName>Alpha-dystroglycan</fullName>
            <shortName>Alpha-DG</shortName>
        </recommendedName>
    </component>
    <component>
        <recommendedName>
            <fullName>Beta-dystroglycan</fullName>
            <shortName>Beta-DG</shortName>
        </recommendedName>
    </component>
</protein>